<evidence type="ECO:0000255" key="1">
    <source>
        <dbReference type="HAMAP-Rule" id="MF_00200"/>
    </source>
</evidence>
<protein>
    <recommendedName>
        <fullName evidence="1">RNA 3'-terminal phosphate cyclase</fullName>
        <shortName evidence="1">RNA cyclase</shortName>
        <shortName evidence="1">RNA-3'-phosphate cyclase</shortName>
        <ecNumber evidence="1">6.5.1.4</ecNumber>
    </recommendedName>
</protein>
<proteinExistence type="inferred from homology"/>
<comment type="function">
    <text evidence="1">Catalyzes the conversion of 3'-phosphate to a 2',3'-cyclic phosphodiester at the end of RNA. The mechanism of action of the enzyme occurs in 3 steps: (A) adenylation of the enzyme by ATP; (B) transfer of adenylate to an RNA-N3'P to produce RNA-N3'PP5'A; (C) and attack of the adjacent 2'-hydroxyl on the 3'-phosphorus in the diester linkage to produce the cyclic end product. The biological role of this enzyme is unknown but it is likely to function in some aspects of cellular RNA processing.</text>
</comment>
<comment type="catalytic activity">
    <reaction evidence="1">
        <text>a 3'-end 3'-phospho-ribonucleotide-RNA + ATP = a 3'-end 2',3'-cyclophospho-ribonucleotide-RNA + AMP + diphosphate</text>
        <dbReference type="Rhea" id="RHEA:23976"/>
        <dbReference type="Rhea" id="RHEA-COMP:10463"/>
        <dbReference type="Rhea" id="RHEA-COMP:10464"/>
        <dbReference type="ChEBI" id="CHEBI:30616"/>
        <dbReference type="ChEBI" id="CHEBI:33019"/>
        <dbReference type="ChEBI" id="CHEBI:83062"/>
        <dbReference type="ChEBI" id="CHEBI:83064"/>
        <dbReference type="ChEBI" id="CHEBI:456215"/>
        <dbReference type="EC" id="6.5.1.4"/>
    </reaction>
</comment>
<comment type="subcellular location">
    <subcellularLocation>
        <location evidence="1">Cytoplasm</location>
    </subcellularLocation>
</comment>
<comment type="similarity">
    <text evidence="1">Belongs to the RNA 3'-terminal cyclase family. Type 1 subfamily.</text>
</comment>
<accession>Q8Y2V6</accession>
<name>RTCA_RALN1</name>
<dbReference type="EC" id="6.5.1.4" evidence="1"/>
<dbReference type="EMBL" id="AL646052">
    <property type="protein sequence ID" value="CAD13754.1"/>
    <property type="molecule type" value="Genomic_DNA"/>
</dbReference>
<dbReference type="RefSeq" id="WP_011000193.1">
    <property type="nucleotide sequence ID" value="NC_003295.1"/>
</dbReference>
<dbReference type="SMR" id="Q8Y2V6"/>
<dbReference type="STRING" id="267608.RSc0226"/>
<dbReference type="EnsemblBacteria" id="CAD13754">
    <property type="protein sequence ID" value="CAD13754"/>
    <property type="gene ID" value="RSc0226"/>
</dbReference>
<dbReference type="KEGG" id="rso:RSc0226"/>
<dbReference type="eggNOG" id="COG0430">
    <property type="taxonomic scope" value="Bacteria"/>
</dbReference>
<dbReference type="HOGENOM" id="CLU_027882_0_0_4"/>
<dbReference type="Proteomes" id="UP000001436">
    <property type="component" value="Chromosome"/>
</dbReference>
<dbReference type="GO" id="GO:0005737">
    <property type="term" value="C:cytoplasm"/>
    <property type="evidence" value="ECO:0007669"/>
    <property type="project" value="UniProtKB-SubCell"/>
</dbReference>
<dbReference type="GO" id="GO:0005524">
    <property type="term" value="F:ATP binding"/>
    <property type="evidence" value="ECO:0007669"/>
    <property type="project" value="UniProtKB-KW"/>
</dbReference>
<dbReference type="GO" id="GO:0003963">
    <property type="term" value="F:RNA-3'-phosphate cyclase activity"/>
    <property type="evidence" value="ECO:0007669"/>
    <property type="project" value="UniProtKB-UniRule"/>
</dbReference>
<dbReference type="GO" id="GO:0006396">
    <property type="term" value="P:RNA processing"/>
    <property type="evidence" value="ECO:0007669"/>
    <property type="project" value="InterPro"/>
</dbReference>
<dbReference type="CDD" id="cd00874">
    <property type="entry name" value="RNA_Cyclase_Class_II"/>
    <property type="match status" value="1"/>
</dbReference>
<dbReference type="Gene3D" id="3.65.10.20">
    <property type="entry name" value="RNA 3'-terminal phosphate cyclase domain"/>
    <property type="match status" value="1"/>
</dbReference>
<dbReference type="Gene3D" id="3.30.360.20">
    <property type="entry name" value="RNA 3'-terminal phosphate cyclase, insert domain"/>
    <property type="match status" value="1"/>
</dbReference>
<dbReference type="HAMAP" id="MF_00200">
    <property type="entry name" value="RTC"/>
    <property type="match status" value="1"/>
</dbReference>
<dbReference type="InterPro" id="IPR013791">
    <property type="entry name" value="RNA3'-term_phos_cycl_insert"/>
</dbReference>
<dbReference type="InterPro" id="IPR023797">
    <property type="entry name" value="RNA3'_phos_cyclase_dom"/>
</dbReference>
<dbReference type="InterPro" id="IPR037136">
    <property type="entry name" value="RNA3'_phos_cyclase_dom_sf"/>
</dbReference>
<dbReference type="InterPro" id="IPR000228">
    <property type="entry name" value="RNA3'_term_phos_cyc"/>
</dbReference>
<dbReference type="InterPro" id="IPR017770">
    <property type="entry name" value="RNA3'_term_phos_cyc_type_1"/>
</dbReference>
<dbReference type="InterPro" id="IPR020719">
    <property type="entry name" value="RNA3'_term_phos_cycl-like_CS"/>
</dbReference>
<dbReference type="InterPro" id="IPR013792">
    <property type="entry name" value="RNA3'P_cycl/enolpyr_Trfase_a/b"/>
</dbReference>
<dbReference type="InterPro" id="IPR036553">
    <property type="entry name" value="RPTC_insert"/>
</dbReference>
<dbReference type="NCBIfam" id="NF003246">
    <property type="entry name" value="PRK04204.1-2"/>
    <property type="match status" value="1"/>
</dbReference>
<dbReference type="NCBIfam" id="NF003247">
    <property type="entry name" value="PRK04204.1-3"/>
    <property type="match status" value="1"/>
</dbReference>
<dbReference type="NCBIfam" id="TIGR03399">
    <property type="entry name" value="RNA_3prim_cycl"/>
    <property type="match status" value="1"/>
</dbReference>
<dbReference type="PANTHER" id="PTHR11096">
    <property type="entry name" value="RNA 3' TERMINAL PHOSPHATE CYCLASE"/>
    <property type="match status" value="1"/>
</dbReference>
<dbReference type="PANTHER" id="PTHR11096:SF0">
    <property type="entry name" value="RNA 3'-TERMINAL PHOSPHATE CYCLASE"/>
    <property type="match status" value="1"/>
</dbReference>
<dbReference type="Pfam" id="PF01137">
    <property type="entry name" value="RTC"/>
    <property type="match status" value="1"/>
</dbReference>
<dbReference type="Pfam" id="PF05189">
    <property type="entry name" value="RTC_insert"/>
    <property type="match status" value="1"/>
</dbReference>
<dbReference type="PIRSF" id="PIRSF005378">
    <property type="entry name" value="RNA3'_term_phos_cycl_euk"/>
    <property type="match status" value="1"/>
</dbReference>
<dbReference type="SUPFAM" id="SSF55205">
    <property type="entry name" value="EPT/RTPC-like"/>
    <property type="match status" value="2"/>
</dbReference>
<dbReference type="SUPFAM" id="SSF52913">
    <property type="entry name" value="RNA 3'-terminal phosphate cyclase, RPTC, insert domain"/>
    <property type="match status" value="1"/>
</dbReference>
<dbReference type="PROSITE" id="PS01287">
    <property type="entry name" value="RTC"/>
    <property type="match status" value="1"/>
</dbReference>
<sequence length="347" mass="35970">MNNRLQPAPCIELDGAQGEGGGQILRTALTLSMLTGTPFRIERIRAGRSKPGLMRQHLTAVQAAAEVSGATVEGAEAGSQALAFAPGPIHGGDYRFAIGTAGSCTLVLQTVLPALWFADAPSTVAVSGGTHNRAAPPVDFLIRAWQPLLARMGVTQTLALKRHGFYPAGGGEVLATVTPCAGRLGALHLTERGALRELSGQGIVANVRPGVARRELEALAARVPGVVGSVRELSPAEGPGNALVLDAVHEHVTEVFTGFGERGVPAEQVAHGVASAALRYLHSTAAVDEYLADQLVLPMALAGAGCFTAVTASPHLTTNIAVIEKFLPVHITVQAERDASVVRVQVN</sequence>
<organism>
    <name type="scientific">Ralstonia nicotianae (strain ATCC BAA-1114 / GMI1000)</name>
    <name type="common">Ralstonia solanacearum</name>
    <dbReference type="NCBI Taxonomy" id="267608"/>
    <lineage>
        <taxon>Bacteria</taxon>
        <taxon>Pseudomonadati</taxon>
        <taxon>Pseudomonadota</taxon>
        <taxon>Betaproteobacteria</taxon>
        <taxon>Burkholderiales</taxon>
        <taxon>Burkholderiaceae</taxon>
        <taxon>Ralstonia</taxon>
        <taxon>Ralstonia solanacearum species complex</taxon>
    </lineage>
</organism>
<keyword id="KW-0067">ATP-binding</keyword>
<keyword id="KW-0963">Cytoplasm</keyword>
<keyword id="KW-0436">Ligase</keyword>
<keyword id="KW-0547">Nucleotide-binding</keyword>
<keyword id="KW-1185">Reference proteome</keyword>
<gene>
    <name evidence="1" type="primary">rtcA</name>
    <name type="ordered locus">RSc0226</name>
    <name type="ORF">RS00658</name>
</gene>
<reference key="1">
    <citation type="journal article" date="2002" name="Nature">
        <title>Genome sequence of the plant pathogen Ralstonia solanacearum.</title>
        <authorList>
            <person name="Salanoubat M."/>
            <person name="Genin S."/>
            <person name="Artiguenave F."/>
            <person name="Gouzy J."/>
            <person name="Mangenot S."/>
            <person name="Arlat M."/>
            <person name="Billault A."/>
            <person name="Brottier P."/>
            <person name="Camus J.-C."/>
            <person name="Cattolico L."/>
            <person name="Chandler M."/>
            <person name="Choisne N."/>
            <person name="Claudel-Renard C."/>
            <person name="Cunnac S."/>
            <person name="Demange N."/>
            <person name="Gaspin C."/>
            <person name="Lavie M."/>
            <person name="Moisan A."/>
            <person name="Robert C."/>
            <person name="Saurin W."/>
            <person name="Schiex T."/>
            <person name="Siguier P."/>
            <person name="Thebault P."/>
            <person name="Whalen M."/>
            <person name="Wincker P."/>
            <person name="Levy M."/>
            <person name="Weissenbach J."/>
            <person name="Boucher C.A."/>
        </authorList>
    </citation>
    <scope>NUCLEOTIDE SEQUENCE [LARGE SCALE GENOMIC DNA]</scope>
    <source>
        <strain>ATCC BAA-1114 / GMI1000</strain>
    </source>
</reference>
<feature type="chain" id="PRO_0000156420" description="RNA 3'-terminal phosphate cyclase">
    <location>
        <begin position="1"/>
        <end position="347"/>
    </location>
</feature>
<feature type="active site" description="Tele-AMP-histidine intermediate" evidence="1">
    <location>
        <position position="315"/>
    </location>
</feature>
<feature type="binding site" evidence="1">
    <location>
        <position position="109"/>
    </location>
    <ligand>
        <name>ATP</name>
        <dbReference type="ChEBI" id="CHEBI:30616"/>
    </ligand>
</feature>
<feature type="binding site" evidence="1">
    <location>
        <begin position="290"/>
        <end position="294"/>
    </location>
    <ligand>
        <name>ATP</name>
        <dbReference type="ChEBI" id="CHEBI:30616"/>
    </ligand>
</feature>